<organism>
    <name type="scientific">Staphylococcus carnosus (strain TM300)</name>
    <dbReference type="NCBI Taxonomy" id="396513"/>
    <lineage>
        <taxon>Bacteria</taxon>
        <taxon>Bacillati</taxon>
        <taxon>Bacillota</taxon>
        <taxon>Bacilli</taxon>
        <taxon>Bacillales</taxon>
        <taxon>Staphylococcaceae</taxon>
        <taxon>Staphylococcus</taxon>
    </lineage>
</organism>
<name>CTAA_STACT</name>
<keyword id="KW-1003">Cell membrane</keyword>
<keyword id="KW-1015">Disulfide bond</keyword>
<keyword id="KW-0350">Heme biosynthesis</keyword>
<keyword id="KW-0408">Iron</keyword>
<keyword id="KW-0472">Membrane</keyword>
<keyword id="KW-0479">Metal-binding</keyword>
<keyword id="KW-0560">Oxidoreductase</keyword>
<keyword id="KW-1185">Reference proteome</keyword>
<keyword id="KW-0812">Transmembrane</keyword>
<keyword id="KW-1133">Transmembrane helix</keyword>
<reference key="1">
    <citation type="journal article" date="2009" name="Appl. Environ. Microbiol.">
        <title>Genome analysis of the meat starter culture bacterium Staphylococcus carnosus TM300.</title>
        <authorList>
            <person name="Rosenstein R."/>
            <person name="Nerz C."/>
            <person name="Biswas L."/>
            <person name="Resch A."/>
            <person name="Raddatz G."/>
            <person name="Schuster S.C."/>
            <person name="Goetz F."/>
        </authorList>
    </citation>
    <scope>NUCLEOTIDE SEQUENCE [LARGE SCALE GENOMIC DNA]</scope>
    <source>
        <strain>TM300</strain>
    </source>
</reference>
<comment type="function">
    <text evidence="1">Catalyzes the conversion of heme O to heme A by two successive hydroxylations of the methyl group at C8. The first hydroxylation forms heme I, the second hydroxylation results in an unstable dihydroxymethyl group, which spontaneously dehydrates, resulting in the formyl group of heme A.</text>
</comment>
<comment type="catalytic activity">
    <reaction evidence="1">
        <text>Fe(II)-heme o + 2 A + H2O = Fe(II)-heme a + 2 AH2</text>
        <dbReference type="Rhea" id="RHEA:63388"/>
        <dbReference type="ChEBI" id="CHEBI:13193"/>
        <dbReference type="ChEBI" id="CHEBI:15377"/>
        <dbReference type="ChEBI" id="CHEBI:17499"/>
        <dbReference type="ChEBI" id="CHEBI:60530"/>
        <dbReference type="ChEBI" id="CHEBI:61715"/>
        <dbReference type="EC" id="1.17.99.9"/>
    </reaction>
    <physiologicalReaction direction="left-to-right" evidence="1">
        <dbReference type="Rhea" id="RHEA:63389"/>
    </physiologicalReaction>
</comment>
<comment type="cofactor">
    <cofactor evidence="1">
        <name>heme b</name>
        <dbReference type="ChEBI" id="CHEBI:60344"/>
    </cofactor>
</comment>
<comment type="pathway">
    <text evidence="1">Porphyrin-containing compound metabolism; heme A biosynthesis; heme A from heme O: step 1/1.</text>
</comment>
<comment type="subunit">
    <text evidence="1">Interacts with CtaB.</text>
</comment>
<comment type="subcellular location">
    <subcellularLocation>
        <location evidence="1">Cell membrane</location>
        <topology evidence="1">Multi-pass membrane protein</topology>
    </subcellularLocation>
</comment>
<comment type="domain">
    <text evidence="1">The N-half (TM1-TM4) and C-half (TM5-TM8) domains are connected by an intracellular loop. Each domain is formed from four-helix bundles and they align in a pseudo twofold symmetry manner. The N-half domain is the substrate-heme O binding domain and the C-half domain is the cofactor heme B binding domain.</text>
</comment>
<comment type="domain">
    <text evidence="1">The cysteines of disulfide bond Cys-37 and Cys-44 may be involved in transfer of reducing equivalents from quinol in the membrane to the active site of the enzyme.</text>
</comment>
<comment type="similarity">
    <text evidence="1">Belongs to the COX15/CtaA family. Type 1 subfamily.</text>
</comment>
<proteinExistence type="inferred from homology"/>
<accession>B9DPV8</accession>
<dbReference type="EC" id="1.17.99.9" evidence="1"/>
<dbReference type="EMBL" id="AM295250">
    <property type="protein sequence ID" value="CAL27651.1"/>
    <property type="molecule type" value="Genomic_DNA"/>
</dbReference>
<dbReference type="RefSeq" id="WP_015899993.1">
    <property type="nucleotide sequence ID" value="NC_012121.1"/>
</dbReference>
<dbReference type="SMR" id="B9DPV8"/>
<dbReference type="GeneID" id="93795678"/>
<dbReference type="KEGG" id="sca:SCA_0741"/>
<dbReference type="eggNOG" id="COG1612">
    <property type="taxonomic scope" value="Bacteria"/>
</dbReference>
<dbReference type="HOGENOM" id="CLU_041525_3_1_9"/>
<dbReference type="OrthoDB" id="9816428at2"/>
<dbReference type="BioCyc" id="SCAR396513:SCA_RS03755-MONOMER"/>
<dbReference type="UniPathway" id="UPA00269">
    <property type="reaction ID" value="UER00713"/>
</dbReference>
<dbReference type="Proteomes" id="UP000000444">
    <property type="component" value="Chromosome"/>
</dbReference>
<dbReference type="GO" id="GO:0005886">
    <property type="term" value="C:plasma membrane"/>
    <property type="evidence" value="ECO:0007669"/>
    <property type="project" value="UniProtKB-SubCell"/>
</dbReference>
<dbReference type="GO" id="GO:0046872">
    <property type="term" value="F:metal ion binding"/>
    <property type="evidence" value="ECO:0007669"/>
    <property type="project" value="UniProtKB-KW"/>
</dbReference>
<dbReference type="GO" id="GO:0016653">
    <property type="term" value="F:oxidoreductase activity, acting on NAD(P)H, heme protein as acceptor"/>
    <property type="evidence" value="ECO:0007669"/>
    <property type="project" value="InterPro"/>
</dbReference>
<dbReference type="GO" id="GO:0006784">
    <property type="term" value="P:heme A biosynthetic process"/>
    <property type="evidence" value="ECO:0007669"/>
    <property type="project" value="UniProtKB-UniRule"/>
</dbReference>
<dbReference type="HAMAP" id="MF_01664">
    <property type="entry name" value="HemeA_synth_type1"/>
    <property type="match status" value="1"/>
</dbReference>
<dbReference type="InterPro" id="IPR003780">
    <property type="entry name" value="COX15/CtaA_fam"/>
</dbReference>
<dbReference type="InterPro" id="IPR050450">
    <property type="entry name" value="COX15/CtaA_HemeA_synthase"/>
</dbReference>
<dbReference type="InterPro" id="IPR023755">
    <property type="entry name" value="HemeA_Synthase_type1"/>
</dbReference>
<dbReference type="PANTHER" id="PTHR35457">
    <property type="entry name" value="HEME A SYNTHASE"/>
    <property type="match status" value="1"/>
</dbReference>
<dbReference type="PANTHER" id="PTHR35457:SF1">
    <property type="entry name" value="HEME A SYNTHASE"/>
    <property type="match status" value="1"/>
</dbReference>
<dbReference type="Pfam" id="PF02628">
    <property type="entry name" value="COX15-CtaA"/>
    <property type="match status" value="1"/>
</dbReference>
<gene>
    <name evidence="1" type="primary">ctaA</name>
    <name type="ordered locus">Sca_0741</name>
</gene>
<protein>
    <recommendedName>
        <fullName evidence="1">Heme A synthase</fullName>
        <shortName evidence="1">HAS</shortName>
        <ecNumber evidence="1">1.17.99.9</ecNumber>
    </recommendedName>
    <alternativeName>
        <fullName evidence="1">Cytochrome aa3-controlling protein</fullName>
    </alternativeName>
</protein>
<feature type="chain" id="PRO_1000187244" description="Heme A synthase">
    <location>
        <begin position="1"/>
        <end position="308"/>
    </location>
</feature>
<feature type="topological domain" description="Cytoplasmic" evidence="1">
    <location>
        <begin position="1"/>
        <end position="8"/>
    </location>
</feature>
<feature type="transmembrane region" description="Helical" evidence="1">
    <location>
        <begin position="9"/>
        <end position="29"/>
    </location>
</feature>
<feature type="topological domain" description="Extracellular" evidence="1">
    <location>
        <begin position="30"/>
        <end position="67"/>
    </location>
</feature>
<feature type="transmembrane region" description="Helical" evidence="1">
    <location>
        <begin position="68"/>
        <end position="88"/>
    </location>
</feature>
<feature type="topological domain" description="Cytoplasmic" evidence="1">
    <location>
        <begin position="89"/>
        <end position="93"/>
    </location>
</feature>
<feature type="transmembrane region" description="Helical" evidence="1">
    <location>
        <begin position="94"/>
        <end position="114"/>
    </location>
</feature>
<feature type="topological domain" description="Extracellular" evidence="1">
    <location>
        <begin position="115"/>
        <end position="123"/>
    </location>
</feature>
<feature type="transmembrane region" description="Helical" evidence="1">
    <location>
        <begin position="124"/>
        <end position="144"/>
    </location>
</feature>
<feature type="topological domain" description="Cytoplasmic" evidence="1">
    <location>
        <begin position="145"/>
        <end position="161"/>
    </location>
</feature>
<feature type="transmembrane region" description="Helical" evidence="1">
    <location>
        <begin position="162"/>
        <end position="182"/>
    </location>
</feature>
<feature type="topological domain" description="Extracellular" evidence="1">
    <location>
        <begin position="183"/>
        <end position="215"/>
    </location>
</feature>
<feature type="transmembrane region" description="Helical" evidence="1">
    <location>
        <begin position="216"/>
        <end position="236"/>
    </location>
</feature>
<feature type="topological domain" description="Cytoplasmic" evidence="1">
    <location>
        <begin position="237"/>
        <end position="244"/>
    </location>
</feature>
<feature type="transmembrane region" description="Helical" evidence="1">
    <location>
        <begin position="245"/>
        <end position="265"/>
    </location>
</feature>
<feature type="topological domain" description="Extracellular" evidence="1">
    <location>
        <begin position="266"/>
        <end position="270"/>
    </location>
</feature>
<feature type="transmembrane region" description="Helical" evidence="1">
    <location>
        <begin position="271"/>
        <end position="291"/>
    </location>
</feature>
<feature type="topological domain" description="Cytoplasmic" evidence="1">
    <location>
        <begin position="292"/>
        <end position="308"/>
    </location>
</feature>
<feature type="active site" evidence="1">
    <location>
        <position position="60"/>
    </location>
</feature>
<feature type="binding site" description="axial binding residue" evidence="1">
    <location>
        <position position="63"/>
    </location>
    <ligand>
        <name>heme o</name>
        <dbReference type="ChEBI" id="CHEBI:24480"/>
    </ligand>
    <ligandPart>
        <name>Fe</name>
        <dbReference type="ChEBI" id="CHEBI:18248"/>
    </ligandPart>
</feature>
<feature type="binding site" description="axial binding residue" evidence="1">
    <location>
        <position position="125"/>
    </location>
    <ligand>
        <name>heme o</name>
        <dbReference type="ChEBI" id="CHEBI:24480"/>
    </ligand>
    <ligandPart>
        <name>Fe</name>
        <dbReference type="ChEBI" id="CHEBI:18248"/>
    </ligandPart>
</feature>
<feature type="binding site" description="axial binding residue" evidence="1">
    <location>
        <position position="214"/>
    </location>
    <ligand>
        <name>heme b</name>
        <dbReference type="ChEBI" id="CHEBI:60344"/>
    </ligand>
    <ligandPart>
        <name>Fe</name>
        <dbReference type="ChEBI" id="CHEBI:18248"/>
    </ligandPart>
</feature>
<feature type="binding site" description="axial binding residue" evidence="1">
    <location>
        <position position="276"/>
    </location>
    <ligand>
        <name>heme b</name>
        <dbReference type="ChEBI" id="CHEBI:60344"/>
    </ligand>
    <ligandPart>
        <name>Fe</name>
        <dbReference type="ChEBI" id="CHEBI:18248"/>
    </ligandPart>
</feature>
<feature type="disulfide bond" description="Essential for catalytic activity" evidence="1">
    <location>
        <begin position="37"/>
        <end position="44"/>
    </location>
</feature>
<evidence type="ECO:0000255" key="1">
    <source>
        <dbReference type="HAMAP-Rule" id="MF_01664"/>
    </source>
</evidence>
<sequence>MFKKRNLKWLSILATVIMAWVQLGGALVTKTGSENGCGASWPLCHGALLPQNLPIATIIELSHRATSALSLIVVLWLVITAWKNIGYIKEVKPLCIISVAFLLIQALVGAAAVLWQQNDYVLALHFGISLISFSSVFVLTLIIFDVDQKYEANKVHIDRKLRIYTWTMAICLYVGIYTGALVRHTKSSLAYGSWPLPFNDLIPHTEQDWVQLAHRTLALIASISVFLAFNYAIKHYQNNRTIRYGYTAALLLIILQIVTGALSIFTHVNLIIALLHALIITFEFGLIAYLIVLLLRSQRVEKVKQNAY</sequence>